<comment type="function">
    <text evidence="1">Catalyzes the phosphorylation of D-fructose 6-phosphate to fructose 1,6-bisphosphate by ATP, the first committing step of glycolysis.</text>
</comment>
<comment type="catalytic activity">
    <reaction evidence="1">
        <text>beta-D-fructose 6-phosphate + ATP = beta-D-fructose 1,6-bisphosphate + ADP + H(+)</text>
        <dbReference type="Rhea" id="RHEA:16109"/>
        <dbReference type="ChEBI" id="CHEBI:15378"/>
        <dbReference type="ChEBI" id="CHEBI:30616"/>
        <dbReference type="ChEBI" id="CHEBI:32966"/>
        <dbReference type="ChEBI" id="CHEBI:57634"/>
        <dbReference type="ChEBI" id="CHEBI:456216"/>
        <dbReference type="EC" id="2.7.1.11"/>
    </reaction>
</comment>
<comment type="cofactor">
    <cofactor evidence="1">
        <name>Mg(2+)</name>
        <dbReference type="ChEBI" id="CHEBI:18420"/>
    </cofactor>
</comment>
<comment type="activity regulation">
    <text evidence="1">Allosterically activated by ADP and other diphosphonucleosides, and allosterically inhibited by phosphoenolpyruvate.</text>
</comment>
<comment type="pathway">
    <text evidence="1">Carbohydrate degradation; glycolysis; D-glyceraldehyde 3-phosphate and glycerone phosphate from D-glucose: step 3/4.</text>
</comment>
<comment type="subunit">
    <text evidence="1">Homotetramer.</text>
</comment>
<comment type="subcellular location">
    <subcellularLocation>
        <location evidence="1">Cytoplasm</location>
    </subcellularLocation>
</comment>
<comment type="similarity">
    <text evidence="1">Belongs to the phosphofructokinase type A (PFKA) family. ATP-dependent PFK group I subfamily. Prokaryotic clade 'B1' sub-subfamily.</text>
</comment>
<proteinExistence type="inferred from homology"/>
<accession>Q5HF75</accession>
<sequence>MKKIAVLTSGGDSPGMNAAVRAVVRTAIYNEIEVYGVYHGYQGLLNDDIHKLELGSVGDTIQRGGTFLYSARCPEFKEQEVRKVAIENLRKRGIEGLVVIGGDGSYRGAQRISEECKEIQTIGIPGTIDNDINGTDFTIGFDTALNTIIGLVDKIRDTASSHARTFIIEAMGRDCGDLALWAGLSVGAETIVVPEVKTDIKEIADKIEQGIKRGKKHSIVLVAEGCMTAQDCQKELSQYINVDNRVSVLGHVQRGGSPTGADRVLASRLGGYAVDLLMQGETAKGVGIKNNKIVATSFDEIFDGKDHKFDYSLYELANKLSI</sequence>
<organism>
    <name type="scientific">Staphylococcus aureus (strain COL)</name>
    <dbReference type="NCBI Taxonomy" id="93062"/>
    <lineage>
        <taxon>Bacteria</taxon>
        <taxon>Bacillati</taxon>
        <taxon>Bacillota</taxon>
        <taxon>Bacilli</taxon>
        <taxon>Bacillales</taxon>
        <taxon>Staphylococcaceae</taxon>
        <taxon>Staphylococcus</taxon>
    </lineage>
</organism>
<name>PFKA_STAAC</name>
<reference key="1">
    <citation type="journal article" date="2005" name="J. Bacteriol.">
        <title>Insights on evolution of virulence and resistance from the complete genome analysis of an early methicillin-resistant Staphylococcus aureus strain and a biofilm-producing methicillin-resistant Staphylococcus epidermidis strain.</title>
        <authorList>
            <person name="Gill S.R."/>
            <person name="Fouts D.E."/>
            <person name="Archer G.L."/>
            <person name="Mongodin E.F."/>
            <person name="DeBoy R.T."/>
            <person name="Ravel J."/>
            <person name="Paulsen I.T."/>
            <person name="Kolonay J.F."/>
            <person name="Brinkac L.M."/>
            <person name="Beanan M.J."/>
            <person name="Dodson R.J."/>
            <person name="Daugherty S.C."/>
            <person name="Madupu R."/>
            <person name="Angiuoli S.V."/>
            <person name="Durkin A.S."/>
            <person name="Haft D.H."/>
            <person name="Vamathevan J.J."/>
            <person name="Khouri H."/>
            <person name="Utterback T.R."/>
            <person name="Lee C."/>
            <person name="Dimitrov G."/>
            <person name="Jiang L."/>
            <person name="Qin H."/>
            <person name="Weidman J."/>
            <person name="Tran K."/>
            <person name="Kang K.H."/>
            <person name="Hance I.R."/>
            <person name="Nelson K.E."/>
            <person name="Fraser C.M."/>
        </authorList>
    </citation>
    <scope>NUCLEOTIDE SEQUENCE [LARGE SCALE GENOMIC DNA]</scope>
    <source>
        <strain>COL</strain>
    </source>
</reference>
<feature type="chain" id="PRO_0000111976" description="ATP-dependent 6-phosphofructokinase">
    <location>
        <begin position="1"/>
        <end position="322"/>
    </location>
</feature>
<feature type="active site" description="Proton acceptor" evidence="1">
    <location>
        <position position="129"/>
    </location>
</feature>
<feature type="binding site" evidence="1">
    <location>
        <position position="11"/>
    </location>
    <ligand>
        <name>ATP</name>
        <dbReference type="ChEBI" id="CHEBI:30616"/>
    </ligand>
</feature>
<feature type="binding site" evidence="1">
    <location>
        <begin position="21"/>
        <end position="25"/>
    </location>
    <ligand>
        <name>ADP</name>
        <dbReference type="ChEBI" id="CHEBI:456216"/>
        <note>allosteric activator; ligand shared between dimeric partners</note>
    </ligand>
</feature>
<feature type="binding site" evidence="1">
    <location>
        <begin position="72"/>
        <end position="73"/>
    </location>
    <ligand>
        <name>ATP</name>
        <dbReference type="ChEBI" id="CHEBI:30616"/>
    </ligand>
</feature>
<feature type="binding site" evidence="1">
    <location>
        <begin position="102"/>
        <end position="105"/>
    </location>
    <ligand>
        <name>ATP</name>
        <dbReference type="ChEBI" id="CHEBI:30616"/>
    </ligand>
</feature>
<feature type="binding site" evidence="1">
    <location>
        <position position="103"/>
    </location>
    <ligand>
        <name>Mg(2+)</name>
        <dbReference type="ChEBI" id="CHEBI:18420"/>
        <note>catalytic</note>
    </ligand>
</feature>
<feature type="binding site" description="in other chain" evidence="1">
    <location>
        <begin position="127"/>
        <end position="129"/>
    </location>
    <ligand>
        <name>substrate</name>
        <note>ligand shared between dimeric partners</note>
    </ligand>
</feature>
<feature type="binding site" description="in other chain" evidence="1">
    <location>
        <position position="156"/>
    </location>
    <ligand>
        <name>ADP</name>
        <dbReference type="ChEBI" id="CHEBI:456216"/>
        <note>allosteric activator; ligand shared between dimeric partners</note>
    </ligand>
</feature>
<feature type="binding site" evidence="1">
    <location>
        <position position="164"/>
    </location>
    <ligand>
        <name>substrate</name>
        <note>ligand shared between dimeric partners</note>
    </ligand>
</feature>
<feature type="binding site" description="in other chain" evidence="1">
    <location>
        <begin position="171"/>
        <end position="173"/>
    </location>
    <ligand>
        <name>substrate</name>
        <note>ligand shared between dimeric partners</note>
    </ligand>
</feature>
<feature type="binding site" description="in other chain" evidence="1">
    <location>
        <begin position="187"/>
        <end position="189"/>
    </location>
    <ligand>
        <name>ADP</name>
        <dbReference type="ChEBI" id="CHEBI:456216"/>
        <note>allosteric activator; ligand shared between dimeric partners</note>
    </ligand>
</feature>
<feature type="binding site" description="in other chain" evidence="1">
    <location>
        <position position="213"/>
    </location>
    <ligand>
        <name>ADP</name>
        <dbReference type="ChEBI" id="CHEBI:456216"/>
        <note>allosteric activator; ligand shared between dimeric partners</note>
    </ligand>
</feature>
<feature type="binding site" description="in other chain" evidence="1">
    <location>
        <begin position="215"/>
        <end position="217"/>
    </location>
    <ligand>
        <name>ADP</name>
        <dbReference type="ChEBI" id="CHEBI:456216"/>
        <note>allosteric activator; ligand shared between dimeric partners</note>
    </ligand>
</feature>
<feature type="binding site" description="in other chain" evidence="1">
    <location>
        <position position="224"/>
    </location>
    <ligand>
        <name>substrate</name>
        <note>ligand shared between dimeric partners</note>
    </ligand>
</feature>
<feature type="binding site" evidence="1">
    <location>
        <position position="245"/>
    </location>
    <ligand>
        <name>substrate</name>
        <note>ligand shared between dimeric partners</note>
    </ligand>
</feature>
<feature type="binding site" description="in other chain" evidence="1">
    <location>
        <begin position="251"/>
        <end position="254"/>
    </location>
    <ligand>
        <name>substrate</name>
        <note>ligand shared between dimeric partners</note>
    </ligand>
</feature>
<keyword id="KW-0021">Allosteric enzyme</keyword>
<keyword id="KW-0067">ATP-binding</keyword>
<keyword id="KW-0963">Cytoplasm</keyword>
<keyword id="KW-0324">Glycolysis</keyword>
<keyword id="KW-0418">Kinase</keyword>
<keyword id="KW-0460">Magnesium</keyword>
<keyword id="KW-0479">Metal-binding</keyword>
<keyword id="KW-0547">Nucleotide-binding</keyword>
<keyword id="KW-0808">Transferase</keyword>
<gene>
    <name evidence="1" type="primary">pfkA</name>
    <name type="ordered locus">SACOL1746</name>
</gene>
<dbReference type="EC" id="2.7.1.11" evidence="1"/>
<dbReference type="EMBL" id="CP000046">
    <property type="protein sequence ID" value="AAW36849.1"/>
    <property type="molecule type" value="Genomic_DNA"/>
</dbReference>
<dbReference type="RefSeq" id="WP_000717561.1">
    <property type="nucleotide sequence ID" value="NZ_JBGOFO010000008.1"/>
</dbReference>
<dbReference type="SMR" id="Q5HF75"/>
<dbReference type="KEGG" id="sac:SACOL1746"/>
<dbReference type="HOGENOM" id="CLU_020655_0_1_9"/>
<dbReference type="UniPathway" id="UPA00109">
    <property type="reaction ID" value="UER00182"/>
</dbReference>
<dbReference type="Proteomes" id="UP000000530">
    <property type="component" value="Chromosome"/>
</dbReference>
<dbReference type="GO" id="GO:0005945">
    <property type="term" value="C:6-phosphofructokinase complex"/>
    <property type="evidence" value="ECO:0007669"/>
    <property type="project" value="TreeGrafter"/>
</dbReference>
<dbReference type="GO" id="GO:0003872">
    <property type="term" value="F:6-phosphofructokinase activity"/>
    <property type="evidence" value="ECO:0007669"/>
    <property type="project" value="UniProtKB-UniRule"/>
</dbReference>
<dbReference type="GO" id="GO:0016208">
    <property type="term" value="F:AMP binding"/>
    <property type="evidence" value="ECO:0007669"/>
    <property type="project" value="TreeGrafter"/>
</dbReference>
<dbReference type="GO" id="GO:0005524">
    <property type="term" value="F:ATP binding"/>
    <property type="evidence" value="ECO:0007669"/>
    <property type="project" value="UniProtKB-KW"/>
</dbReference>
<dbReference type="GO" id="GO:0070095">
    <property type="term" value="F:fructose-6-phosphate binding"/>
    <property type="evidence" value="ECO:0007669"/>
    <property type="project" value="TreeGrafter"/>
</dbReference>
<dbReference type="GO" id="GO:0042802">
    <property type="term" value="F:identical protein binding"/>
    <property type="evidence" value="ECO:0007669"/>
    <property type="project" value="TreeGrafter"/>
</dbReference>
<dbReference type="GO" id="GO:0046872">
    <property type="term" value="F:metal ion binding"/>
    <property type="evidence" value="ECO:0007669"/>
    <property type="project" value="UniProtKB-KW"/>
</dbReference>
<dbReference type="GO" id="GO:0048029">
    <property type="term" value="F:monosaccharide binding"/>
    <property type="evidence" value="ECO:0007669"/>
    <property type="project" value="TreeGrafter"/>
</dbReference>
<dbReference type="GO" id="GO:0061621">
    <property type="term" value="P:canonical glycolysis"/>
    <property type="evidence" value="ECO:0007669"/>
    <property type="project" value="TreeGrafter"/>
</dbReference>
<dbReference type="GO" id="GO:0030388">
    <property type="term" value="P:fructose 1,6-bisphosphate metabolic process"/>
    <property type="evidence" value="ECO:0007669"/>
    <property type="project" value="TreeGrafter"/>
</dbReference>
<dbReference type="GO" id="GO:0006002">
    <property type="term" value="P:fructose 6-phosphate metabolic process"/>
    <property type="evidence" value="ECO:0007669"/>
    <property type="project" value="InterPro"/>
</dbReference>
<dbReference type="FunFam" id="3.40.50.450:FF:000001">
    <property type="entry name" value="ATP-dependent 6-phosphofructokinase"/>
    <property type="match status" value="1"/>
</dbReference>
<dbReference type="FunFam" id="3.40.50.460:FF:000002">
    <property type="entry name" value="ATP-dependent 6-phosphofructokinase"/>
    <property type="match status" value="1"/>
</dbReference>
<dbReference type="Gene3D" id="3.40.50.450">
    <property type="match status" value="1"/>
</dbReference>
<dbReference type="Gene3D" id="3.40.50.460">
    <property type="entry name" value="Phosphofructokinase domain"/>
    <property type="match status" value="1"/>
</dbReference>
<dbReference type="HAMAP" id="MF_00339">
    <property type="entry name" value="Phosphofructokinase_I_B1"/>
    <property type="match status" value="1"/>
</dbReference>
<dbReference type="InterPro" id="IPR022953">
    <property type="entry name" value="ATP_PFK"/>
</dbReference>
<dbReference type="InterPro" id="IPR012003">
    <property type="entry name" value="ATP_PFK_prok-type"/>
</dbReference>
<dbReference type="InterPro" id="IPR012828">
    <property type="entry name" value="PFKA_ATP_prok"/>
</dbReference>
<dbReference type="InterPro" id="IPR015912">
    <property type="entry name" value="Phosphofructokinase_CS"/>
</dbReference>
<dbReference type="InterPro" id="IPR000023">
    <property type="entry name" value="Phosphofructokinase_dom"/>
</dbReference>
<dbReference type="InterPro" id="IPR035966">
    <property type="entry name" value="PKF_sf"/>
</dbReference>
<dbReference type="NCBIfam" id="TIGR02482">
    <property type="entry name" value="PFKA_ATP"/>
    <property type="match status" value="1"/>
</dbReference>
<dbReference type="NCBIfam" id="NF002872">
    <property type="entry name" value="PRK03202.1"/>
    <property type="match status" value="1"/>
</dbReference>
<dbReference type="PANTHER" id="PTHR13697:SF4">
    <property type="entry name" value="ATP-DEPENDENT 6-PHOSPHOFRUCTOKINASE"/>
    <property type="match status" value="1"/>
</dbReference>
<dbReference type="PANTHER" id="PTHR13697">
    <property type="entry name" value="PHOSPHOFRUCTOKINASE"/>
    <property type="match status" value="1"/>
</dbReference>
<dbReference type="Pfam" id="PF00365">
    <property type="entry name" value="PFK"/>
    <property type="match status" value="1"/>
</dbReference>
<dbReference type="PIRSF" id="PIRSF000532">
    <property type="entry name" value="ATP_PFK_prok"/>
    <property type="match status" value="1"/>
</dbReference>
<dbReference type="PRINTS" id="PR00476">
    <property type="entry name" value="PHFRCTKINASE"/>
</dbReference>
<dbReference type="SUPFAM" id="SSF53784">
    <property type="entry name" value="Phosphofructokinase"/>
    <property type="match status" value="1"/>
</dbReference>
<dbReference type="PROSITE" id="PS00433">
    <property type="entry name" value="PHOSPHOFRUCTOKINASE"/>
    <property type="match status" value="1"/>
</dbReference>
<protein>
    <recommendedName>
        <fullName evidence="1">ATP-dependent 6-phosphofructokinase</fullName>
        <shortName evidence="1">ATP-PFK</shortName>
        <shortName evidence="1">Phosphofructokinase</shortName>
        <ecNumber evidence="1">2.7.1.11</ecNumber>
    </recommendedName>
    <alternativeName>
        <fullName evidence="1">Phosphohexokinase</fullName>
    </alternativeName>
</protein>
<evidence type="ECO:0000255" key="1">
    <source>
        <dbReference type="HAMAP-Rule" id="MF_00339"/>
    </source>
</evidence>